<organism>
    <name type="scientific">Stutzerimonas stutzeri</name>
    <name type="common">Pseudomonas stutzeri</name>
    <dbReference type="NCBI Taxonomy" id="316"/>
    <lineage>
        <taxon>Bacteria</taxon>
        <taxon>Pseudomonadati</taxon>
        <taxon>Pseudomonadota</taxon>
        <taxon>Gammaproteobacteria</taxon>
        <taxon>Pseudomonadales</taxon>
        <taxon>Pseudomonadaceae</taxon>
        <taxon>Stutzerimonas</taxon>
    </lineage>
</organism>
<reference key="1">
    <citation type="journal article" date="1995" name="Eur. J. Biochem.">
        <title>Resolution of the nirD locus for heme d1 synthesis of cytochrome cd1 (respiratory nitrite reductase) from Pseudomonas stutzeri.</title>
        <authorList>
            <person name="Palmedo G."/>
            <person name="Seither P."/>
            <person name="Koerner H."/>
            <person name="Matthews J.C."/>
            <person name="Burkhalter R.S."/>
            <person name="Timkovich R."/>
            <person name="Zumft W.G."/>
        </authorList>
    </citation>
    <scope>NUCLEOTIDE SEQUENCE [GENOMIC DNA]</scope>
    <scope>DISRUPTION PHENOTYPE</scope>
    <source>
        <strain>ATCC 14405 / JCM 20778 / CIP 107696 / IAM 12931 / LMG 2243 / NCIMB 568 / Baumann 218 / ZoBell 632</strain>
    </source>
</reference>
<accession>Q52525</accession>
<name>NIRH_STUST</name>
<comment type="function">
    <text evidence="1">Involved in heme d1 biosynthesis. Catalyzes the decarboxylation of siroheme into didecarboxysiroheme.</text>
</comment>
<comment type="catalytic activity">
    <reaction evidence="1">
        <text>siroheme + 2 H(+) = 12,18-didecarboxysiroheme + 2 CO2</text>
        <dbReference type="Rhea" id="RHEA:19093"/>
        <dbReference type="ChEBI" id="CHEBI:15378"/>
        <dbReference type="ChEBI" id="CHEBI:16526"/>
        <dbReference type="ChEBI" id="CHEBI:60052"/>
        <dbReference type="ChEBI" id="CHEBI:140497"/>
        <dbReference type="EC" id="4.1.1.111"/>
    </reaction>
</comment>
<comment type="pathway">
    <text evidence="1">Porphyrin-containing compound metabolism.</text>
</comment>
<comment type="subunit">
    <text evidence="1">Probably forms a complex composed of NirD, NirL, NirG and NirH. All proteins are required for the total conversion of siroheme to didecarboxysiroheme.</text>
</comment>
<comment type="disruption phenotype">
    <text evidence="2">Insertional mutagenesis results in the loss of respiratory nitrite reductase activity in vivo and in vitro. Mutant strains synthesize a periplasmic cytochrome cd1 that lacks heme d1.</text>
</comment>
<comment type="similarity">
    <text evidence="4">Belongs to the Ahb/Nir family.</text>
</comment>
<keyword id="KW-0456">Lyase</keyword>
<proteinExistence type="inferred from homology"/>
<protein>
    <recommendedName>
        <fullName evidence="1">Siroheme decarboxylase NirH subunit</fullName>
        <ecNumber evidence="1">4.1.1.111</ecNumber>
    </recommendedName>
</protein>
<gene>
    <name evidence="3" type="primary">nirH</name>
</gene>
<dbReference type="EC" id="4.1.1.111" evidence="1"/>
<dbReference type="EMBL" id="X53676">
    <property type="protein sequence ID" value="CAA90582.1"/>
    <property type="molecule type" value="Genomic_DNA"/>
</dbReference>
<dbReference type="PIR" id="S68355">
    <property type="entry name" value="S68355"/>
</dbReference>
<dbReference type="RefSeq" id="WP_003279929.1">
    <property type="nucleotide sequence ID" value="NZ_CP036186.1"/>
</dbReference>
<dbReference type="SMR" id="Q52525"/>
<dbReference type="GO" id="GO:0016829">
    <property type="term" value="F:lyase activity"/>
    <property type="evidence" value="ECO:0007669"/>
    <property type="project" value="UniProtKB-KW"/>
</dbReference>
<dbReference type="Gene3D" id="3.30.70.3460">
    <property type="match status" value="1"/>
</dbReference>
<dbReference type="InterPro" id="IPR040523">
    <property type="entry name" value="AsnC_trans_reg2"/>
</dbReference>
<dbReference type="InterPro" id="IPR050684">
    <property type="entry name" value="HTH-Siroheme_Decarb"/>
</dbReference>
<dbReference type="InterPro" id="IPR053953">
    <property type="entry name" value="NirdL-like_HTH"/>
</dbReference>
<dbReference type="PANTHER" id="PTHR43413:SF1">
    <property type="entry name" value="SIROHEME DECARBOXYLASE NIRL SUBUNIT"/>
    <property type="match status" value="1"/>
</dbReference>
<dbReference type="PANTHER" id="PTHR43413">
    <property type="entry name" value="TRANSCRIPTIONAL REGULATOR, ASNC FAMILY"/>
    <property type="match status" value="1"/>
</dbReference>
<dbReference type="Pfam" id="PF17805">
    <property type="entry name" value="AsnC_trans_reg2"/>
    <property type="match status" value="1"/>
</dbReference>
<dbReference type="Pfam" id="PF22451">
    <property type="entry name" value="NirdL-like_HTH"/>
    <property type="match status" value="1"/>
</dbReference>
<evidence type="ECO:0000250" key="1">
    <source>
        <dbReference type="UniProtKB" id="I6UF18"/>
    </source>
</evidence>
<evidence type="ECO:0000269" key="2">
    <source>
    </source>
</evidence>
<evidence type="ECO:0000303" key="3">
    <source>
    </source>
</evidence>
<evidence type="ECO:0000305" key="4"/>
<sequence length="168" mass="18793">MSVCTSPSDEGLTRRLIELTEAGLPLVADPWAWLAEELGIDVDDTLALLQRLQADGAIRRVAAIPNHYRLGYRHNGMTVWDVDDAEIARLGALIGAQPFVSHCYRRPRQEGWPYNLFAMVHGRDASDIEAYRNQIRALLGNACRANDMLVSSRILKKTGLRLAGQRRV</sequence>
<feature type="chain" id="PRO_0000096860" description="Siroheme decarboxylase NirH subunit">
    <location>
        <begin position="1"/>
        <end position="168"/>
    </location>
</feature>